<proteinExistence type="evidence at protein level"/>
<organism>
    <name type="scientific">Mus musculus</name>
    <name type="common">Mouse</name>
    <dbReference type="NCBI Taxonomy" id="10090"/>
    <lineage>
        <taxon>Eukaryota</taxon>
        <taxon>Metazoa</taxon>
        <taxon>Chordata</taxon>
        <taxon>Craniata</taxon>
        <taxon>Vertebrata</taxon>
        <taxon>Euteleostomi</taxon>
        <taxon>Mammalia</taxon>
        <taxon>Eutheria</taxon>
        <taxon>Euarchontoglires</taxon>
        <taxon>Glires</taxon>
        <taxon>Rodentia</taxon>
        <taxon>Myomorpha</taxon>
        <taxon>Muroidea</taxon>
        <taxon>Muridae</taxon>
        <taxon>Murinae</taxon>
        <taxon>Mus</taxon>
        <taxon>Mus</taxon>
    </lineage>
</organism>
<name>KCJ16_MOUSE</name>
<evidence type="ECO:0000250" key="1"/>
<evidence type="ECO:0000250" key="2">
    <source>
        <dbReference type="UniProtKB" id="F1NHE9"/>
    </source>
</evidence>
<evidence type="ECO:0000250" key="3">
    <source>
        <dbReference type="UniProtKB" id="P52191"/>
    </source>
</evidence>
<evidence type="ECO:0000250" key="4">
    <source>
        <dbReference type="UniProtKB" id="Q9NPI9"/>
    </source>
</evidence>
<evidence type="ECO:0000269" key="5">
    <source>
    </source>
</evidence>
<evidence type="ECO:0000269" key="6">
    <source>
    </source>
</evidence>
<evidence type="ECO:0000305" key="7"/>
<evidence type="ECO:0007744" key="8">
    <source>
    </source>
</evidence>
<accession>Q9Z307</accession>
<accession>Q8BH37</accession>
<sequence>MSYYGSSYRIVNVDSKYPGYPPEHAIAEKRRARRRLLHKDGSCNVYFKHIFGEWGSYMVDIFTTLVDTKWRHMFVIFSLSYILSWLIFGSIFWLIAFHHGDLLSDPDITPCVDNVHSFTAAFLFSLETQTTIGYGYRCVTEECSVAVLTVILQSILSCIINTFIIGAALAKMATARKRAQTIRFSYFALIGMRDGKLCLMWRIGDFRPNHVVEGTVRAQLLRYSEDSEGRMTMAFKDLKLVNDQIILVTPVTIVHEIDHESPLYALDRKAVAKDNFEILVTFIYTGDSTGTSHQSRSSYIPREILWGHRFHDVLEVKRKYYKVNCLQFEGSVEVYAPFCSAKQLDWKDQQLNNLEKTSPARGSCNSDTNTRRRSFSAVAVVSSCENPEETVLSPQDECKEMPYQKALLTLNRISMESQM</sequence>
<keyword id="KW-1003">Cell membrane</keyword>
<keyword id="KW-0407">Ion channel</keyword>
<keyword id="KW-0406">Ion transport</keyword>
<keyword id="KW-0472">Membrane</keyword>
<keyword id="KW-0597">Phosphoprotein</keyword>
<keyword id="KW-0630">Potassium</keyword>
<keyword id="KW-0633">Potassium transport</keyword>
<keyword id="KW-1185">Reference proteome</keyword>
<keyword id="KW-0812">Transmembrane</keyword>
<keyword id="KW-1133">Transmembrane helix</keyword>
<keyword id="KW-0813">Transport</keyword>
<keyword id="KW-0851">Voltage-gated channel</keyword>
<protein>
    <recommendedName>
        <fullName>Inward rectifier potassium channel 16</fullName>
    </recommendedName>
    <alternativeName>
        <fullName>Inward rectifier K(+) channel Kir5.1</fullName>
    </alternativeName>
    <alternativeName>
        <fullName>Potassium channel, inwardly rectifying subfamily J member 16</fullName>
    </alternativeName>
</protein>
<feature type="chain" id="PRO_0000154976" description="Inward rectifier potassium channel 16">
    <location>
        <begin position="1"/>
        <end position="419"/>
    </location>
</feature>
<feature type="topological domain" description="Cytoplasmic" evidence="2">
    <location>
        <begin position="1"/>
        <end position="67"/>
    </location>
</feature>
<feature type="transmembrane region" description="Helical; Name=M1" evidence="2">
    <location>
        <begin position="68"/>
        <end position="94"/>
    </location>
</feature>
<feature type="topological domain" description="Extracellular" evidence="2">
    <location>
        <begin position="95"/>
        <end position="117"/>
    </location>
</feature>
<feature type="intramembrane region" description="Helical; Pore-forming; Name=H5" evidence="2">
    <location>
        <begin position="118"/>
        <end position="134"/>
    </location>
</feature>
<feature type="topological domain" description="Extracellular" evidence="2">
    <location>
        <begin position="135"/>
        <end position="143"/>
    </location>
</feature>
<feature type="transmembrane region" description="Helical; Name=M2" evidence="2">
    <location>
        <begin position="144"/>
        <end position="171"/>
    </location>
</feature>
<feature type="topological domain" description="Cytoplasmic" evidence="2">
    <location>
        <begin position="172"/>
        <end position="419"/>
    </location>
</feature>
<feature type="short sequence motif" description="Selectivity filter" evidence="2">
    <location>
        <begin position="131"/>
        <end position="136"/>
    </location>
</feature>
<feature type="site" description="Role in the control of polyamine-mediated channel gating and in the blocking by intracellular magnesium" evidence="1">
    <location>
        <position position="161"/>
    </location>
</feature>
<feature type="modified residue" description="Phosphoserine" evidence="8">
    <location>
        <position position="358"/>
    </location>
</feature>
<feature type="modified residue" description="Phosphoserine" evidence="8">
    <location>
        <position position="374"/>
    </location>
</feature>
<feature type="modified residue" description="Phosphoserine" evidence="8">
    <location>
        <position position="376"/>
    </location>
</feature>
<feature type="sequence conflict" description="In Ref. 1; BAA34723." evidence="7" ref="1">
    <original>V</original>
    <variation>I</variation>
    <location>
        <position position="75"/>
    </location>
</feature>
<feature type="sequence conflict" description="In Ref. 1; BAA34723." evidence="7" ref="1">
    <original>L</original>
    <variation>P</variation>
    <location>
        <position position="197"/>
    </location>
</feature>
<comment type="function">
    <text evidence="4">Inward rectifier potassium channels are characterized by a greater tendency to allow potassium to flow into the cell rather than out of it. Their voltage dependence is regulated by the concentration of extracellular potassium; as external potassium is raised, the voltage range of the channel opening shifts to more positive voltages. The inward rectification is mainly due to the blockage of outward current by internal magnesium. KCNJ16 may be involved in the regulation of fluid and pH balance. In the kidney, together with KCNJ10, mediates basolateral K(+) recycling in distal tubules; this process is critical for Na(+) reabsorption at the tubules.</text>
</comment>
<comment type="catalytic activity">
    <reaction evidence="6">
        <text>K(+)(in) = K(+)(out)</text>
        <dbReference type="Rhea" id="RHEA:29463"/>
        <dbReference type="ChEBI" id="CHEBI:29103"/>
    </reaction>
</comment>
<comment type="activity regulation">
    <text evidence="3">Channel activity is strongly regulated by variations of cytosolic pH; channels are activated by alkaline and inhibited by acidic pH values. Activated by phosphatidylinositol 4,5 biphosphate (PtdIns(4,5)P2).</text>
</comment>
<comment type="subunit">
    <text evidence="4 6">It forms heteromeric channels with Kir4.1/KCNJ10; this interaction is required for KCNJ16 localization to the basolateral membrane in kidney cells. As a heteromer with KCNJ10, may interact with MAGI1; this interaction may facilitate KCNJ10/KCNJ16 potassium channel expression at the basolateral membrane in kidney cells. May form heteromers with Kir2.1/KCNJ2. Can form heteromeric channels with Kir4.2/KCNJ15 (PubMed:9882736).</text>
</comment>
<comment type="subcellular location">
    <subcellularLocation>
        <location evidence="4">Membrane</location>
        <topology evidence="4">Multi-pass membrane protein</topology>
    </subcellularLocation>
    <subcellularLocation>
        <location evidence="4">Basolateral cell membrane</location>
    </subcellularLocation>
    <text evidence="4">In kidney distal convoluted tubules, located in the basolateral membrane in the presence of KCNJ10.</text>
</comment>
<comment type="tissue specificity">
    <text evidence="5">Abundantly expressed in the proximal and distal segments of the nephron.</text>
</comment>
<comment type="similarity">
    <text evidence="7">Belongs to the inward rectifier-type potassium channel (TC 1.A.2.1) family. KCNJ16 subfamily.</text>
</comment>
<gene>
    <name type="primary">Kcnj16</name>
</gene>
<reference key="1">
    <citation type="journal article" date="1998" name="Genomics">
        <title>Assignment of mouse inwardly rectifying potassium channel Kcnj16 to the distal region of mouse chromosome 11.</title>
        <authorList>
            <person name="Mouri T."/>
            <person name="Kittaka N."/>
            <person name="Horio Y."/>
            <person name="Copeland N.G."/>
            <person name="Gilbert D.J."/>
            <person name="Jenkins N.A."/>
            <person name="Kurachi Y."/>
        </authorList>
    </citation>
    <scope>NUCLEOTIDE SEQUENCE [MRNA]</scope>
    <source>
        <strain>C57BL/6J</strain>
        <tissue>Brain</tissue>
    </source>
</reference>
<reference key="2">
    <citation type="submission" date="2003-09" db="EMBL/GenBank/DDBJ databases">
        <title>Interaction of inner ear-specific Kir channels.</title>
        <authorList>
            <person name="Nie L."/>
            <person name="Feng W.H."/>
            <person name="Vazquez A.E."/>
            <person name="Yamoah E.N."/>
        </authorList>
    </citation>
    <scope>NUCLEOTIDE SEQUENCE [MRNA]</scope>
    <source>
        <strain>C57BL/6J</strain>
        <tissue>Cochlea</tissue>
    </source>
</reference>
<reference key="3">
    <citation type="journal article" date="2005" name="Science">
        <title>The transcriptional landscape of the mammalian genome.</title>
        <authorList>
            <person name="Carninci P."/>
            <person name="Kasukawa T."/>
            <person name="Katayama S."/>
            <person name="Gough J."/>
            <person name="Frith M.C."/>
            <person name="Maeda N."/>
            <person name="Oyama R."/>
            <person name="Ravasi T."/>
            <person name="Lenhard B."/>
            <person name="Wells C."/>
            <person name="Kodzius R."/>
            <person name="Shimokawa K."/>
            <person name="Bajic V.B."/>
            <person name="Brenner S.E."/>
            <person name="Batalov S."/>
            <person name="Forrest A.R."/>
            <person name="Zavolan M."/>
            <person name="Davis M.J."/>
            <person name="Wilming L.G."/>
            <person name="Aidinis V."/>
            <person name="Allen J.E."/>
            <person name="Ambesi-Impiombato A."/>
            <person name="Apweiler R."/>
            <person name="Aturaliya R.N."/>
            <person name="Bailey T.L."/>
            <person name="Bansal M."/>
            <person name="Baxter L."/>
            <person name="Beisel K.W."/>
            <person name="Bersano T."/>
            <person name="Bono H."/>
            <person name="Chalk A.M."/>
            <person name="Chiu K.P."/>
            <person name="Choudhary V."/>
            <person name="Christoffels A."/>
            <person name="Clutterbuck D.R."/>
            <person name="Crowe M.L."/>
            <person name="Dalla E."/>
            <person name="Dalrymple B.P."/>
            <person name="de Bono B."/>
            <person name="Della Gatta G."/>
            <person name="di Bernardo D."/>
            <person name="Down T."/>
            <person name="Engstrom P."/>
            <person name="Fagiolini M."/>
            <person name="Faulkner G."/>
            <person name="Fletcher C.F."/>
            <person name="Fukushima T."/>
            <person name="Furuno M."/>
            <person name="Futaki S."/>
            <person name="Gariboldi M."/>
            <person name="Georgii-Hemming P."/>
            <person name="Gingeras T.R."/>
            <person name="Gojobori T."/>
            <person name="Green R.E."/>
            <person name="Gustincich S."/>
            <person name="Harbers M."/>
            <person name="Hayashi Y."/>
            <person name="Hensch T.K."/>
            <person name="Hirokawa N."/>
            <person name="Hill D."/>
            <person name="Huminiecki L."/>
            <person name="Iacono M."/>
            <person name="Ikeo K."/>
            <person name="Iwama A."/>
            <person name="Ishikawa T."/>
            <person name="Jakt M."/>
            <person name="Kanapin A."/>
            <person name="Katoh M."/>
            <person name="Kawasawa Y."/>
            <person name="Kelso J."/>
            <person name="Kitamura H."/>
            <person name="Kitano H."/>
            <person name="Kollias G."/>
            <person name="Krishnan S.P."/>
            <person name="Kruger A."/>
            <person name="Kummerfeld S.K."/>
            <person name="Kurochkin I.V."/>
            <person name="Lareau L.F."/>
            <person name="Lazarevic D."/>
            <person name="Lipovich L."/>
            <person name="Liu J."/>
            <person name="Liuni S."/>
            <person name="McWilliam S."/>
            <person name="Madan Babu M."/>
            <person name="Madera M."/>
            <person name="Marchionni L."/>
            <person name="Matsuda H."/>
            <person name="Matsuzawa S."/>
            <person name="Miki H."/>
            <person name="Mignone F."/>
            <person name="Miyake S."/>
            <person name="Morris K."/>
            <person name="Mottagui-Tabar S."/>
            <person name="Mulder N."/>
            <person name="Nakano N."/>
            <person name="Nakauchi H."/>
            <person name="Ng P."/>
            <person name="Nilsson R."/>
            <person name="Nishiguchi S."/>
            <person name="Nishikawa S."/>
            <person name="Nori F."/>
            <person name="Ohara O."/>
            <person name="Okazaki Y."/>
            <person name="Orlando V."/>
            <person name="Pang K.C."/>
            <person name="Pavan W.J."/>
            <person name="Pavesi G."/>
            <person name="Pesole G."/>
            <person name="Petrovsky N."/>
            <person name="Piazza S."/>
            <person name="Reed J."/>
            <person name="Reid J.F."/>
            <person name="Ring B.Z."/>
            <person name="Ringwald M."/>
            <person name="Rost B."/>
            <person name="Ruan Y."/>
            <person name="Salzberg S.L."/>
            <person name="Sandelin A."/>
            <person name="Schneider C."/>
            <person name="Schoenbach C."/>
            <person name="Sekiguchi K."/>
            <person name="Semple C.A."/>
            <person name="Seno S."/>
            <person name="Sessa L."/>
            <person name="Sheng Y."/>
            <person name="Shibata Y."/>
            <person name="Shimada H."/>
            <person name="Shimada K."/>
            <person name="Silva D."/>
            <person name="Sinclair B."/>
            <person name="Sperling S."/>
            <person name="Stupka E."/>
            <person name="Sugiura K."/>
            <person name="Sultana R."/>
            <person name="Takenaka Y."/>
            <person name="Taki K."/>
            <person name="Tammoja K."/>
            <person name="Tan S.L."/>
            <person name="Tang S."/>
            <person name="Taylor M.S."/>
            <person name="Tegner J."/>
            <person name="Teichmann S.A."/>
            <person name="Ueda H.R."/>
            <person name="van Nimwegen E."/>
            <person name="Verardo R."/>
            <person name="Wei C.L."/>
            <person name="Yagi K."/>
            <person name="Yamanishi H."/>
            <person name="Zabarovsky E."/>
            <person name="Zhu S."/>
            <person name="Zimmer A."/>
            <person name="Hide W."/>
            <person name="Bult C."/>
            <person name="Grimmond S.M."/>
            <person name="Teasdale R.D."/>
            <person name="Liu E.T."/>
            <person name="Brusic V."/>
            <person name="Quackenbush J."/>
            <person name="Wahlestedt C."/>
            <person name="Mattick J.S."/>
            <person name="Hume D.A."/>
            <person name="Kai C."/>
            <person name="Sasaki D."/>
            <person name="Tomaru Y."/>
            <person name="Fukuda S."/>
            <person name="Kanamori-Katayama M."/>
            <person name="Suzuki M."/>
            <person name="Aoki J."/>
            <person name="Arakawa T."/>
            <person name="Iida J."/>
            <person name="Imamura K."/>
            <person name="Itoh M."/>
            <person name="Kato T."/>
            <person name="Kawaji H."/>
            <person name="Kawagashira N."/>
            <person name="Kawashima T."/>
            <person name="Kojima M."/>
            <person name="Kondo S."/>
            <person name="Konno H."/>
            <person name="Nakano K."/>
            <person name="Ninomiya N."/>
            <person name="Nishio T."/>
            <person name="Okada M."/>
            <person name="Plessy C."/>
            <person name="Shibata K."/>
            <person name="Shiraki T."/>
            <person name="Suzuki S."/>
            <person name="Tagami M."/>
            <person name="Waki K."/>
            <person name="Watahiki A."/>
            <person name="Okamura-Oho Y."/>
            <person name="Suzuki H."/>
            <person name="Kawai J."/>
            <person name="Hayashizaki Y."/>
        </authorList>
    </citation>
    <scope>NUCLEOTIDE SEQUENCE [LARGE SCALE MRNA]</scope>
    <source>
        <strain>C57BL/6J</strain>
        <tissue>Cecum</tissue>
        <tissue>Corpora quadrigemina</tissue>
        <tissue>Olfactory bulb</tissue>
    </source>
</reference>
<reference key="4">
    <citation type="journal article" date="2009" name="PLoS Biol.">
        <title>Lineage-specific biology revealed by a finished genome assembly of the mouse.</title>
        <authorList>
            <person name="Church D.M."/>
            <person name="Goodstadt L."/>
            <person name="Hillier L.W."/>
            <person name="Zody M.C."/>
            <person name="Goldstein S."/>
            <person name="She X."/>
            <person name="Bult C.J."/>
            <person name="Agarwala R."/>
            <person name="Cherry J.L."/>
            <person name="DiCuccio M."/>
            <person name="Hlavina W."/>
            <person name="Kapustin Y."/>
            <person name="Meric P."/>
            <person name="Maglott D."/>
            <person name="Birtle Z."/>
            <person name="Marques A.C."/>
            <person name="Graves T."/>
            <person name="Zhou S."/>
            <person name="Teague B."/>
            <person name="Potamousis K."/>
            <person name="Churas C."/>
            <person name="Place M."/>
            <person name="Herschleb J."/>
            <person name="Runnheim R."/>
            <person name="Forrest D."/>
            <person name="Amos-Landgraf J."/>
            <person name="Schwartz D.C."/>
            <person name="Cheng Z."/>
            <person name="Lindblad-Toh K."/>
            <person name="Eichler E.E."/>
            <person name="Ponting C.P."/>
        </authorList>
    </citation>
    <scope>NUCLEOTIDE SEQUENCE [LARGE SCALE GENOMIC DNA]</scope>
    <source>
        <strain>C57BL/6J</strain>
    </source>
</reference>
<reference key="5">
    <citation type="submission" date="2005-07" db="EMBL/GenBank/DDBJ databases">
        <authorList>
            <person name="Mural R.J."/>
            <person name="Adams M.D."/>
            <person name="Myers E.W."/>
            <person name="Smith H.O."/>
            <person name="Venter J.C."/>
        </authorList>
    </citation>
    <scope>NUCLEOTIDE SEQUENCE [LARGE SCALE GENOMIC DNA]</scope>
</reference>
<reference key="6">
    <citation type="journal article" date="1999" name="J. Physiol. (Lond.)">
        <title>Expression of a functional Kir4 family inward rectifier K+ channel from a gene cloned from mouse liver.</title>
        <authorList>
            <person name="Pearson W.L."/>
            <person name="Dourado M."/>
            <person name="Schreiber M."/>
            <person name="Salkoff L."/>
            <person name="Nichols C.G."/>
        </authorList>
    </citation>
    <scope>INTERACTION WITH KCNJ15</scope>
    <scope>TRANSPORTER ACTIVITY</scope>
</reference>
<reference key="7">
    <citation type="journal article" date="2010" name="Cell">
        <title>A tissue-specific atlas of mouse protein phosphorylation and expression.</title>
        <authorList>
            <person name="Huttlin E.L."/>
            <person name="Jedrychowski M.P."/>
            <person name="Elias J.E."/>
            <person name="Goswami T."/>
            <person name="Rad R."/>
            <person name="Beausoleil S.A."/>
            <person name="Villen J."/>
            <person name="Haas W."/>
            <person name="Sowa M.E."/>
            <person name="Gygi S.P."/>
        </authorList>
    </citation>
    <scope>PHOSPHORYLATION [LARGE SCALE ANALYSIS] AT SER-358; SER-374 AND SER-376</scope>
    <scope>IDENTIFICATION BY MASS SPECTROMETRY [LARGE SCALE ANALYSIS]</scope>
    <source>
        <tissue>Kidney</tissue>
    </source>
</reference>
<reference key="8">
    <citation type="journal article" date="2021" name="J. Am. Soc. Nephrol.">
        <title>Defects in KCNJ16 cause a novel tubulopathy with hypokalemia, salt wasting, disturbed acid-base homeostasis, and sensorineural deafness.</title>
        <authorList>
            <person name="Schlingmann K.P."/>
            <person name="Renigunta A."/>
            <person name="Hoorn E.J."/>
            <person name="Forst A.L."/>
            <person name="Renigunta V."/>
            <person name="Atanasov V."/>
            <person name="Mahendran S."/>
            <person name="Barakat T.S."/>
            <person name="Gillion V."/>
            <person name="Godefroid N."/>
            <person name="Brooks A.S."/>
            <person name="Lugtenberg D."/>
            <person name="Lake J."/>
            <person name="Debaix H."/>
            <person name="Rudin C."/>
            <person name="Knebelmann B."/>
            <person name="Tellier S."/>
            <person name="Rousset-Rouviere C."/>
            <person name="Viering D."/>
            <person name="de Baaij J.H.F."/>
            <person name="Weber S."/>
            <person name="Palygin O."/>
            <person name="Staruschenko A."/>
            <person name="Kleta R."/>
            <person name="Houillier P."/>
            <person name="Bockenhauer D."/>
            <person name="Devuyst O."/>
            <person name="Vargas-Poussou R."/>
            <person name="Warth R."/>
            <person name="Zdebik A.A."/>
            <person name="Konrad M."/>
        </authorList>
    </citation>
    <scope>TISSUE SPECIFICITY</scope>
</reference>
<dbReference type="EMBL" id="AB016197">
    <property type="protein sequence ID" value="BAA34723.1"/>
    <property type="molecule type" value="mRNA"/>
</dbReference>
<dbReference type="EMBL" id="AY377989">
    <property type="protein sequence ID" value="AAQ88167.1"/>
    <property type="molecule type" value="mRNA"/>
</dbReference>
<dbReference type="EMBL" id="AK032192">
    <property type="protein sequence ID" value="BAC27749.1"/>
    <property type="molecule type" value="mRNA"/>
</dbReference>
<dbReference type="EMBL" id="AK045447">
    <property type="protein sequence ID" value="BAC32374.1"/>
    <property type="molecule type" value="mRNA"/>
</dbReference>
<dbReference type="EMBL" id="AK078905">
    <property type="protein sequence ID" value="BAC37450.1"/>
    <property type="molecule type" value="mRNA"/>
</dbReference>
<dbReference type="EMBL" id="AK140249">
    <property type="protein sequence ID" value="BAE24297.1"/>
    <property type="molecule type" value="mRNA"/>
</dbReference>
<dbReference type="EMBL" id="AL592422">
    <property type="status" value="NOT_ANNOTATED_CDS"/>
    <property type="molecule type" value="Genomic_DNA"/>
</dbReference>
<dbReference type="EMBL" id="CH466558">
    <property type="protein sequence ID" value="EDL34389.1"/>
    <property type="molecule type" value="Genomic_DNA"/>
</dbReference>
<dbReference type="EMBL" id="CH466558">
    <property type="protein sequence ID" value="EDL34390.1"/>
    <property type="molecule type" value="Genomic_DNA"/>
</dbReference>
<dbReference type="EMBL" id="CH466558">
    <property type="protein sequence ID" value="EDL34391.1"/>
    <property type="molecule type" value="Genomic_DNA"/>
</dbReference>
<dbReference type="EMBL" id="CH466558">
    <property type="protein sequence ID" value="EDL34392.1"/>
    <property type="molecule type" value="Genomic_DNA"/>
</dbReference>
<dbReference type="CCDS" id="CCDS25593.1"/>
<dbReference type="RefSeq" id="NP_001239136.1">
    <property type="nucleotide sequence ID" value="NM_001252207.1"/>
</dbReference>
<dbReference type="RefSeq" id="NP_001239137.1">
    <property type="nucleotide sequence ID" value="NM_001252208.1"/>
</dbReference>
<dbReference type="RefSeq" id="NP_001239138.1">
    <property type="nucleotide sequence ID" value="NM_001252209.2"/>
</dbReference>
<dbReference type="RefSeq" id="NP_001239139.1">
    <property type="nucleotide sequence ID" value="NM_001252210.2"/>
</dbReference>
<dbReference type="RefSeq" id="NP_034734.3">
    <property type="nucleotide sequence ID" value="NM_010604.3"/>
</dbReference>
<dbReference type="RefSeq" id="XP_036012243.1">
    <property type="nucleotide sequence ID" value="XM_036156350.1"/>
</dbReference>
<dbReference type="SMR" id="Q9Z307"/>
<dbReference type="BioGRID" id="200899">
    <property type="interactions" value="1"/>
</dbReference>
<dbReference type="FunCoup" id="Q9Z307">
    <property type="interactions" value="326"/>
</dbReference>
<dbReference type="IntAct" id="Q9Z307">
    <property type="interactions" value="2"/>
</dbReference>
<dbReference type="STRING" id="10090.ENSMUSP00000136382"/>
<dbReference type="GlyGen" id="Q9Z307">
    <property type="glycosylation" value="1 site"/>
</dbReference>
<dbReference type="iPTMnet" id="Q9Z307"/>
<dbReference type="PhosphoSitePlus" id="Q9Z307"/>
<dbReference type="jPOST" id="Q9Z307"/>
<dbReference type="PaxDb" id="10090-ENSMUSP00000102246"/>
<dbReference type="ProteomicsDB" id="269189"/>
<dbReference type="Antibodypedia" id="31886">
    <property type="antibodies" value="169 antibodies from 29 providers"/>
</dbReference>
<dbReference type="DNASU" id="16517"/>
<dbReference type="Ensembl" id="ENSMUST00000106635.2">
    <property type="protein sequence ID" value="ENSMUSP00000102246.2"/>
    <property type="gene ID" value="ENSMUSG00000051497.16"/>
</dbReference>
<dbReference type="Ensembl" id="ENSMUST00000106636.8">
    <property type="protein sequence ID" value="ENSMUSP00000102247.2"/>
    <property type="gene ID" value="ENSMUSG00000051497.16"/>
</dbReference>
<dbReference type="Ensembl" id="ENSMUST00000178798.2">
    <property type="protein sequence ID" value="ENSMUSP00000137414.2"/>
    <property type="gene ID" value="ENSMUSG00000051497.16"/>
</dbReference>
<dbReference type="Ensembl" id="ENSMUST00000180023.8">
    <property type="protein sequence ID" value="ENSMUSP00000136382.2"/>
    <property type="gene ID" value="ENSMUSG00000051497.16"/>
</dbReference>
<dbReference type="GeneID" id="16517"/>
<dbReference type="KEGG" id="mmu:16517"/>
<dbReference type="UCSC" id="uc007mdu.1">
    <property type="organism name" value="mouse"/>
</dbReference>
<dbReference type="AGR" id="MGI:1314842"/>
<dbReference type="CTD" id="3773"/>
<dbReference type="MGI" id="MGI:1314842">
    <property type="gene designation" value="Kcnj16"/>
</dbReference>
<dbReference type="VEuPathDB" id="HostDB:ENSMUSG00000051497"/>
<dbReference type="eggNOG" id="KOG3827">
    <property type="taxonomic scope" value="Eukaryota"/>
</dbReference>
<dbReference type="GeneTree" id="ENSGT01030000234586"/>
<dbReference type="HOGENOM" id="CLU_022738_3_2_1"/>
<dbReference type="InParanoid" id="Q9Z307"/>
<dbReference type="OMA" id="CVFEVRS"/>
<dbReference type="OrthoDB" id="273257at2759"/>
<dbReference type="PhylomeDB" id="Q9Z307"/>
<dbReference type="TreeFam" id="TF313676"/>
<dbReference type="Reactome" id="R-MMU-1296041">
    <property type="pathway name" value="Activation of G protein gated Potassium channels"/>
</dbReference>
<dbReference type="Reactome" id="R-MMU-1296067">
    <property type="pathway name" value="Potassium transport channels"/>
</dbReference>
<dbReference type="Reactome" id="R-MMU-997272">
    <property type="pathway name" value="Inhibition of voltage gated Ca2+ channels via Gbeta/gamma subunits"/>
</dbReference>
<dbReference type="BioGRID-ORCS" id="16517">
    <property type="hits" value="1 hit in 77 CRISPR screens"/>
</dbReference>
<dbReference type="ChiTaRS" id="Kcnj16">
    <property type="organism name" value="mouse"/>
</dbReference>
<dbReference type="PRO" id="PR:Q9Z307"/>
<dbReference type="Proteomes" id="UP000000589">
    <property type="component" value="Chromosome 11"/>
</dbReference>
<dbReference type="RNAct" id="Q9Z307">
    <property type="molecule type" value="protein"/>
</dbReference>
<dbReference type="Bgee" id="ENSMUSG00000051497">
    <property type="expression patterns" value="Expressed in adult mammalian kidney and 124 other cell types or tissues"/>
</dbReference>
<dbReference type="ExpressionAtlas" id="Q9Z307">
    <property type="expression patterns" value="baseline and differential"/>
</dbReference>
<dbReference type="GO" id="GO:0016323">
    <property type="term" value="C:basolateral plasma membrane"/>
    <property type="evidence" value="ECO:0000314"/>
    <property type="project" value="MGI"/>
</dbReference>
<dbReference type="GO" id="GO:0034702">
    <property type="term" value="C:monoatomic ion channel complex"/>
    <property type="evidence" value="ECO:0007669"/>
    <property type="project" value="UniProtKB-KW"/>
</dbReference>
<dbReference type="GO" id="GO:0005886">
    <property type="term" value="C:plasma membrane"/>
    <property type="evidence" value="ECO:0000314"/>
    <property type="project" value="MGI"/>
</dbReference>
<dbReference type="GO" id="GO:0005242">
    <property type="term" value="F:inward rectifier potassium channel activity"/>
    <property type="evidence" value="ECO:0007669"/>
    <property type="project" value="Ensembl"/>
</dbReference>
<dbReference type="FunFam" id="1.10.287.70:FF:000063">
    <property type="entry name" value="ATP-sensitive inward rectifier potassium channel 14"/>
    <property type="match status" value="1"/>
</dbReference>
<dbReference type="FunFam" id="2.60.40.1400:FF:000003">
    <property type="entry name" value="Potassium voltage-gated channel subfamily J member 16"/>
    <property type="match status" value="1"/>
</dbReference>
<dbReference type="Gene3D" id="1.10.287.70">
    <property type="match status" value="1"/>
</dbReference>
<dbReference type="Gene3D" id="2.60.40.1400">
    <property type="entry name" value="G protein-activated inward rectifier potassium channel 1"/>
    <property type="match status" value="1"/>
</dbReference>
<dbReference type="InterPro" id="IPR014756">
    <property type="entry name" value="Ig_E-set"/>
</dbReference>
<dbReference type="InterPro" id="IPR041647">
    <property type="entry name" value="IRK_C"/>
</dbReference>
<dbReference type="InterPro" id="IPR016449">
    <property type="entry name" value="K_chnl_inward-rec_Kir"/>
</dbReference>
<dbReference type="InterPro" id="IPR008061">
    <property type="entry name" value="K_chnl_inward-rec_Kir5"/>
</dbReference>
<dbReference type="InterPro" id="IPR013518">
    <property type="entry name" value="K_chnl_inward-rec_Kir_cyto"/>
</dbReference>
<dbReference type="InterPro" id="IPR040445">
    <property type="entry name" value="Kir_TM"/>
</dbReference>
<dbReference type="PANTHER" id="PTHR11767">
    <property type="entry name" value="INWARD RECTIFIER POTASSIUM CHANNEL"/>
    <property type="match status" value="1"/>
</dbReference>
<dbReference type="PANTHER" id="PTHR11767:SF24">
    <property type="entry name" value="INWARD RECTIFIER POTASSIUM CHANNEL 16"/>
    <property type="match status" value="1"/>
</dbReference>
<dbReference type="Pfam" id="PF01007">
    <property type="entry name" value="IRK"/>
    <property type="match status" value="1"/>
</dbReference>
<dbReference type="Pfam" id="PF17655">
    <property type="entry name" value="IRK_C"/>
    <property type="match status" value="1"/>
</dbReference>
<dbReference type="PIRSF" id="PIRSF005465">
    <property type="entry name" value="GIRK_kir"/>
    <property type="match status" value="1"/>
</dbReference>
<dbReference type="PRINTS" id="PR01678">
    <property type="entry name" value="KIR5CHANNEL"/>
</dbReference>
<dbReference type="PRINTS" id="PR01320">
    <property type="entry name" value="KIRCHANNEL"/>
</dbReference>
<dbReference type="SUPFAM" id="SSF81296">
    <property type="entry name" value="E set domains"/>
    <property type="match status" value="1"/>
</dbReference>
<dbReference type="SUPFAM" id="SSF81324">
    <property type="entry name" value="Voltage-gated potassium channels"/>
    <property type="match status" value="1"/>
</dbReference>